<dbReference type="EMBL" id="CU329670">
    <property type="protein sequence ID" value="CAB11053.3"/>
    <property type="molecule type" value="Genomic_DNA"/>
</dbReference>
<dbReference type="PIR" id="T38836">
    <property type="entry name" value="T38836"/>
</dbReference>
<dbReference type="RefSeq" id="NP_593866.2">
    <property type="nucleotide sequence ID" value="NM_001019295.2"/>
</dbReference>
<dbReference type="SMR" id="O14182"/>
<dbReference type="BioGRID" id="280028">
    <property type="interactions" value="2"/>
</dbReference>
<dbReference type="FunCoup" id="O14182">
    <property type="interactions" value="235"/>
</dbReference>
<dbReference type="STRING" id="284812.O14182"/>
<dbReference type="PaxDb" id="4896-SPAC4F8.06.1"/>
<dbReference type="EnsemblFungi" id="SPAC4F8.06.1">
    <property type="protein sequence ID" value="SPAC4F8.06.1:pep"/>
    <property type="gene ID" value="SPAC4F8.06"/>
</dbReference>
<dbReference type="GeneID" id="2543614"/>
<dbReference type="KEGG" id="spo:2543614"/>
<dbReference type="PomBase" id="SPAC4F8.06">
    <property type="gene designation" value="mrps12"/>
</dbReference>
<dbReference type="VEuPathDB" id="FungiDB:SPAC4F8.06"/>
<dbReference type="eggNOG" id="KOG1750">
    <property type="taxonomic scope" value="Eukaryota"/>
</dbReference>
<dbReference type="HOGENOM" id="CLU_104295_0_1_1"/>
<dbReference type="InParanoid" id="O14182"/>
<dbReference type="OMA" id="VCIRVYT"/>
<dbReference type="PRO" id="PR:O14182"/>
<dbReference type="Proteomes" id="UP000002485">
    <property type="component" value="Chromosome I"/>
</dbReference>
<dbReference type="GO" id="GO:0005763">
    <property type="term" value="C:mitochondrial small ribosomal subunit"/>
    <property type="evidence" value="ECO:0000250"/>
    <property type="project" value="PomBase"/>
</dbReference>
<dbReference type="GO" id="GO:0005739">
    <property type="term" value="C:mitochondrion"/>
    <property type="evidence" value="ECO:0007005"/>
    <property type="project" value="PomBase"/>
</dbReference>
<dbReference type="GO" id="GO:0005840">
    <property type="term" value="C:ribosome"/>
    <property type="evidence" value="ECO:0000318"/>
    <property type="project" value="GO_Central"/>
</dbReference>
<dbReference type="GO" id="GO:0003735">
    <property type="term" value="F:structural constituent of ribosome"/>
    <property type="evidence" value="ECO:0000318"/>
    <property type="project" value="GO_Central"/>
</dbReference>
<dbReference type="GO" id="GO:0032543">
    <property type="term" value="P:mitochondrial translation"/>
    <property type="evidence" value="ECO:0000250"/>
    <property type="project" value="PomBase"/>
</dbReference>
<dbReference type="GO" id="GO:0006412">
    <property type="term" value="P:translation"/>
    <property type="evidence" value="ECO:0000318"/>
    <property type="project" value="GO_Central"/>
</dbReference>
<dbReference type="CDD" id="cd03368">
    <property type="entry name" value="Ribosomal_S12"/>
    <property type="match status" value="1"/>
</dbReference>
<dbReference type="FunFam" id="2.40.50.140:FF:000099">
    <property type="entry name" value="Ribosomal protein S12, mitochondrial"/>
    <property type="match status" value="1"/>
</dbReference>
<dbReference type="Gene3D" id="2.40.50.140">
    <property type="entry name" value="Nucleic acid-binding proteins"/>
    <property type="match status" value="1"/>
</dbReference>
<dbReference type="InterPro" id="IPR012340">
    <property type="entry name" value="NA-bd_OB-fold"/>
</dbReference>
<dbReference type="InterPro" id="IPR006032">
    <property type="entry name" value="Ribosomal_uS12"/>
</dbReference>
<dbReference type="InterPro" id="IPR005679">
    <property type="entry name" value="Ribosomal_uS12_bac"/>
</dbReference>
<dbReference type="NCBIfam" id="TIGR00981">
    <property type="entry name" value="rpsL_bact"/>
    <property type="match status" value="1"/>
</dbReference>
<dbReference type="PANTHER" id="PTHR11652">
    <property type="entry name" value="30S RIBOSOMAL PROTEIN S12 FAMILY MEMBER"/>
    <property type="match status" value="1"/>
</dbReference>
<dbReference type="Pfam" id="PF00164">
    <property type="entry name" value="Ribosom_S12_S23"/>
    <property type="match status" value="1"/>
</dbReference>
<dbReference type="PRINTS" id="PR01034">
    <property type="entry name" value="RIBOSOMALS12"/>
</dbReference>
<dbReference type="SUPFAM" id="SSF50249">
    <property type="entry name" value="Nucleic acid-binding proteins"/>
    <property type="match status" value="1"/>
</dbReference>
<dbReference type="PROSITE" id="PS00055">
    <property type="entry name" value="RIBOSOMAL_S12"/>
    <property type="match status" value="1"/>
</dbReference>
<comment type="function">
    <text evidence="1">Component of the mitochondrial ribosome (mitoribosome), a dedicated translation machinery responsible for the synthesis of mitochondrial genome-encoded proteins, including at least some of the essential transmembrane subunits of the mitochondrial respiratory chain. The mitoribosomes are attached to the mitochondrial inner membrane and translation products are cotranslationally integrated into the membrane. uS12m is required for respiratory growth.</text>
</comment>
<comment type="subunit">
    <text evidence="1">Component of the mitochondrial small ribosomal subunit (mt-SSU). Mature yeast 74S mitochondrial ribosomes consist of a small (37S) and a large (54S) subunit. The 37S small subunit contains a 15S ribosomal RNA (15S mt-rRNA) and at least 32 different proteins. The 54S large subunit contains a 21S rRNA (21S mt-rRNA) and at least 45 different proteins. uS12m forms part of the decoding center of the mt-SSU.</text>
</comment>
<comment type="subcellular location">
    <subcellularLocation>
        <location evidence="3">Mitochondrion</location>
    </subcellularLocation>
</comment>
<comment type="similarity">
    <text evidence="2">Belongs to the universal ribosomal protein uS12 family.</text>
</comment>
<evidence type="ECO:0000250" key="1">
    <source>
        <dbReference type="UniProtKB" id="P53732"/>
    </source>
</evidence>
<evidence type="ECO:0000255" key="2"/>
<evidence type="ECO:0000269" key="3">
    <source>
    </source>
</evidence>
<evidence type="ECO:0000305" key="4"/>
<reference key="1">
    <citation type="journal article" date="2002" name="Nature">
        <title>The genome sequence of Schizosaccharomyces pombe.</title>
        <authorList>
            <person name="Wood V."/>
            <person name="Gwilliam R."/>
            <person name="Rajandream M.A."/>
            <person name="Lyne M.H."/>
            <person name="Lyne R."/>
            <person name="Stewart A."/>
            <person name="Sgouros J.G."/>
            <person name="Peat N."/>
            <person name="Hayles J."/>
            <person name="Baker S.G."/>
            <person name="Basham D."/>
            <person name="Bowman S."/>
            <person name="Brooks K."/>
            <person name="Brown D."/>
            <person name="Brown S."/>
            <person name="Chillingworth T."/>
            <person name="Churcher C.M."/>
            <person name="Collins M."/>
            <person name="Connor R."/>
            <person name="Cronin A."/>
            <person name="Davis P."/>
            <person name="Feltwell T."/>
            <person name="Fraser A."/>
            <person name="Gentles S."/>
            <person name="Goble A."/>
            <person name="Hamlin N."/>
            <person name="Harris D.E."/>
            <person name="Hidalgo J."/>
            <person name="Hodgson G."/>
            <person name="Holroyd S."/>
            <person name="Hornsby T."/>
            <person name="Howarth S."/>
            <person name="Huckle E.J."/>
            <person name="Hunt S."/>
            <person name="Jagels K."/>
            <person name="James K.D."/>
            <person name="Jones L."/>
            <person name="Jones M."/>
            <person name="Leather S."/>
            <person name="McDonald S."/>
            <person name="McLean J."/>
            <person name="Mooney P."/>
            <person name="Moule S."/>
            <person name="Mungall K.L."/>
            <person name="Murphy L.D."/>
            <person name="Niblett D."/>
            <person name="Odell C."/>
            <person name="Oliver K."/>
            <person name="O'Neil S."/>
            <person name="Pearson D."/>
            <person name="Quail M.A."/>
            <person name="Rabbinowitsch E."/>
            <person name="Rutherford K.M."/>
            <person name="Rutter S."/>
            <person name="Saunders D."/>
            <person name="Seeger K."/>
            <person name="Sharp S."/>
            <person name="Skelton J."/>
            <person name="Simmonds M.N."/>
            <person name="Squares R."/>
            <person name="Squares S."/>
            <person name="Stevens K."/>
            <person name="Taylor K."/>
            <person name="Taylor R.G."/>
            <person name="Tivey A."/>
            <person name="Walsh S.V."/>
            <person name="Warren T."/>
            <person name="Whitehead S."/>
            <person name="Woodward J.R."/>
            <person name="Volckaert G."/>
            <person name="Aert R."/>
            <person name="Robben J."/>
            <person name="Grymonprez B."/>
            <person name="Weltjens I."/>
            <person name="Vanstreels E."/>
            <person name="Rieger M."/>
            <person name="Schaefer M."/>
            <person name="Mueller-Auer S."/>
            <person name="Gabel C."/>
            <person name="Fuchs M."/>
            <person name="Duesterhoeft A."/>
            <person name="Fritzc C."/>
            <person name="Holzer E."/>
            <person name="Moestl D."/>
            <person name="Hilbert H."/>
            <person name="Borzym K."/>
            <person name="Langer I."/>
            <person name="Beck A."/>
            <person name="Lehrach H."/>
            <person name="Reinhardt R."/>
            <person name="Pohl T.M."/>
            <person name="Eger P."/>
            <person name="Zimmermann W."/>
            <person name="Wedler H."/>
            <person name="Wambutt R."/>
            <person name="Purnelle B."/>
            <person name="Goffeau A."/>
            <person name="Cadieu E."/>
            <person name="Dreano S."/>
            <person name="Gloux S."/>
            <person name="Lelaure V."/>
            <person name="Mottier S."/>
            <person name="Galibert F."/>
            <person name="Aves S.J."/>
            <person name="Xiang Z."/>
            <person name="Hunt C."/>
            <person name="Moore K."/>
            <person name="Hurst S.M."/>
            <person name="Lucas M."/>
            <person name="Rochet M."/>
            <person name="Gaillardin C."/>
            <person name="Tallada V.A."/>
            <person name="Garzon A."/>
            <person name="Thode G."/>
            <person name="Daga R.R."/>
            <person name="Cruzado L."/>
            <person name="Jimenez J."/>
            <person name="Sanchez M."/>
            <person name="del Rey F."/>
            <person name="Benito J."/>
            <person name="Dominguez A."/>
            <person name="Revuelta J.L."/>
            <person name="Moreno S."/>
            <person name="Armstrong J."/>
            <person name="Forsburg S.L."/>
            <person name="Cerutti L."/>
            <person name="Lowe T."/>
            <person name="McCombie W.R."/>
            <person name="Paulsen I."/>
            <person name="Potashkin J."/>
            <person name="Shpakovski G.V."/>
            <person name="Ussery D."/>
            <person name="Barrell B.G."/>
            <person name="Nurse P."/>
        </authorList>
    </citation>
    <scope>NUCLEOTIDE SEQUENCE [LARGE SCALE GENOMIC DNA]</scope>
    <source>
        <strain>972 / ATCC 24843</strain>
    </source>
</reference>
<reference key="2">
    <citation type="journal article" date="2011" name="Science">
        <title>Comparative functional genomics of the fission yeasts.</title>
        <authorList>
            <person name="Rhind N."/>
            <person name="Chen Z."/>
            <person name="Yassour M."/>
            <person name="Thompson D.A."/>
            <person name="Haas B.J."/>
            <person name="Habib N."/>
            <person name="Wapinski I."/>
            <person name="Roy S."/>
            <person name="Lin M.F."/>
            <person name="Heiman D.I."/>
            <person name="Young S.K."/>
            <person name="Furuya K."/>
            <person name="Guo Y."/>
            <person name="Pidoux A."/>
            <person name="Chen H.M."/>
            <person name="Robbertse B."/>
            <person name="Goldberg J.M."/>
            <person name="Aoki K."/>
            <person name="Bayne E.H."/>
            <person name="Berlin A.M."/>
            <person name="Desjardins C.A."/>
            <person name="Dobbs E."/>
            <person name="Dukaj L."/>
            <person name="Fan L."/>
            <person name="FitzGerald M.G."/>
            <person name="French C."/>
            <person name="Gujja S."/>
            <person name="Hansen K."/>
            <person name="Keifenheim D."/>
            <person name="Levin J.Z."/>
            <person name="Mosher R.A."/>
            <person name="Mueller C.A."/>
            <person name="Pfiffner J."/>
            <person name="Priest M."/>
            <person name="Russ C."/>
            <person name="Smialowska A."/>
            <person name="Swoboda P."/>
            <person name="Sykes S.M."/>
            <person name="Vaughn M."/>
            <person name="Vengrova S."/>
            <person name="Yoder R."/>
            <person name="Zeng Q."/>
            <person name="Allshire R."/>
            <person name="Baulcombe D."/>
            <person name="Birren B.W."/>
            <person name="Brown W."/>
            <person name="Ekwall K."/>
            <person name="Kellis M."/>
            <person name="Leatherwood J."/>
            <person name="Levin H."/>
            <person name="Margalit H."/>
            <person name="Martienssen R."/>
            <person name="Nieduszynski C.A."/>
            <person name="Spatafora J.W."/>
            <person name="Friedman N."/>
            <person name="Dalgaard J.Z."/>
            <person name="Baumann P."/>
            <person name="Niki H."/>
            <person name="Regev A."/>
            <person name="Nusbaum C."/>
        </authorList>
    </citation>
    <scope>REVISION OF GENE MODEL</scope>
</reference>
<reference evidence="4" key="3">
    <citation type="journal article" date="2006" name="Nat. Biotechnol.">
        <title>ORFeome cloning and global analysis of protein localization in the fission yeast Schizosaccharomyces pombe.</title>
        <authorList>
            <person name="Matsuyama A."/>
            <person name="Arai R."/>
            <person name="Yashiroda Y."/>
            <person name="Shirai A."/>
            <person name="Kamata A."/>
            <person name="Sekido S."/>
            <person name="Kobayashi Y."/>
            <person name="Hashimoto A."/>
            <person name="Hamamoto M."/>
            <person name="Hiraoka Y."/>
            <person name="Horinouchi S."/>
            <person name="Yoshida M."/>
        </authorList>
    </citation>
    <scope>SUBCELLULAR LOCATION [LARGE SCALE ANALYSIS]</scope>
</reference>
<protein>
    <recommendedName>
        <fullName evidence="4">Small ribosomal subunit protein uS12m</fullName>
    </recommendedName>
    <alternativeName>
        <fullName>37S ribosomal protein S12, mitochondrial</fullName>
    </alternativeName>
</protein>
<name>RT12_SCHPO</name>
<proteinExistence type="inferred from homology"/>
<accession>O14182</accession>
<sequence>MIRFAQYARYPVISRLMKPTVISPFQAQAFSSSSVMLKTLNQTIRNKEKRPEKTNKQSVALEGSPFRRGVCTRVFTVKPKKPNSAVRKVARVRLSTGRSVTAYIPGIGHNAQEHAVVLLRGGRAQDCPGVQYHVVRGVYDIAGVAGRVTSRSKYGVKKPKAA</sequence>
<gene>
    <name evidence="1" type="primary">mrps12</name>
    <name type="ORF">SPAC4F8.06</name>
</gene>
<organism>
    <name type="scientific">Schizosaccharomyces pombe (strain 972 / ATCC 24843)</name>
    <name type="common">Fission yeast</name>
    <dbReference type="NCBI Taxonomy" id="284812"/>
    <lineage>
        <taxon>Eukaryota</taxon>
        <taxon>Fungi</taxon>
        <taxon>Dikarya</taxon>
        <taxon>Ascomycota</taxon>
        <taxon>Taphrinomycotina</taxon>
        <taxon>Schizosaccharomycetes</taxon>
        <taxon>Schizosaccharomycetales</taxon>
        <taxon>Schizosaccharomycetaceae</taxon>
        <taxon>Schizosaccharomyces</taxon>
    </lineage>
</organism>
<keyword id="KW-0496">Mitochondrion</keyword>
<keyword id="KW-1185">Reference proteome</keyword>
<keyword id="KW-0687">Ribonucleoprotein</keyword>
<keyword id="KW-0689">Ribosomal protein</keyword>
<keyword id="KW-0809">Transit peptide</keyword>
<feature type="transit peptide" description="Mitochondrion" evidence="2">
    <location>
        <begin position="1"/>
        <end position="37"/>
    </location>
</feature>
<feature type="chain" id="PRO_0000309557" description="Small ribosomal subunit protein uS12m">
    <location>
        <begin position="38"/>
        <end position="162"/>
    </location>
</feature>